<dbReference type="EMBL" id="DQ914917">
    <property type="protein sequence ID" value="ABI81608.1"/>
    <property type="molecule type" value="Genomic_DNA"/>
</dbReference>
<dbReference type="EMBL" id="DQ914917">
    <property type="protein sequence ID" value="ABI81609.1"/>
    <property type="molecule type" value="Genomic_DNA"/>
</dbReference>
<dbReference type="EMBL" id="DQ914918">
    <property type="protein sequence ID" value="ABI81610.1"/>
    <property type="molecule type" value="mRNA"/>
</dbReference>
<dbReference type="EMBL" id="DQ914919">
    <property type="protein sequence ID" value="ABI81611.1"/>
    <property type="molecule type" value="mRNA"/>
</dbReference>
<dbReference type="EMBL" id="DQ914920">
    <property type="protein sequence ID" value="ABI81612.1"/>
    <property type="molecule type" value="mRNA"/>
</dbReference>
<dbReference type="EMBL" id="AY518286">
    <property type="protein sequence ID" value="AAR99869.1"/>
    <property type="status" value="ALT_INIT"/>
    <property type="molecule type" value="mRNA"/>
</dbReference>
<dbReference type="EMBL" id="AC006234">
    <property type="protein sequence ID" value="AAD20910.3"/>
    <property type="status" value="ALT_INIT"/>
    <property type="molecule type" value="Genomic_DNA"/>
</dbReference>
<dbReference type="EMBL" id="CP002685">
    <property type="protein sequence ID" value="AEC07087.1"/>
    <property type="molecule type" value="Genomic_DNA"/>
</dbReference>
<dbReference type="EMBL" id="AY056176">
    <property type="protein sequence ID" value="AAL07025.1"/>
    <property type="molecule type" value="mRNA"/>
</dbReference>
<dbReference type="EMBL" id="BT001939">
    <property type="protein sequence ID" value="AAN71938.1"/>
    <property type="molecule type" value="mRNA"/>
</dbReference>
<dbReference type="PIR" id="B84594">
    <property type="entry name" value="B84594"/>
</dbReference>
<dbReference type="RefSeq" id="NP_565489.2">
    <molecule id="Q06BH3-1"/>
    <property type="nucleotide sequence ID" value="NM_127654.4"/>
</dbReference>
<dbReference type="SMR" id="Q06BH3"/>
<dbReference type="BioGRID" id="1971">
    <property type="interactions" value="28"/>
</dbReference>
<dbReference type="FunCoup" id="Q06BH3">
    <property type="interactions" value="168"/>
</dbReference>
<dbReference type="IntAct" id="Q06BH3">
    <property type="interactions" value="30"/>
</dbReference>
<dbReference type="STRING" id="3702.Q06BH3"/>
<dbReference type="GlyCosmos" id="Q06BH3">
    <property type="glycosylation" value="5 sites, No reported glycans"/>
</dbReference>
<dbReference type="GlyGen" id="Q06BH3">
    <property type="glycosylation" value="7 sites"/>
</dbReference>
<dbReference type="iPTMnet" id="Q06BH3"/>
<dbReference type="PaxDb" id="3702-AT2G20850.1"/>
<dbReference type="ProteomicsDB" id="226723">
    <molecule id="Q06BH3-1"/>
</dbReference>
<dbReference type="EnsemblPlants" id="AT2G20850.1">
    <molecule id="Q06BH3-1"/>
    <property type="protein sequence ID" value="AT2G20850.1"/>
    <property type="gene ID" value="AT2G20850"/>
</dbReference>
<dbReference type="GeneID" id="816618"/>
<dbReference type="Gramene" id="AT2G20850.1">
    <molecule id="Q06BH3-1"/>
    <property type="protein sequence ID" value="AT2G20850.1"/>
    <property type="gene ID" value="AT2G20850"/>
</dbReference>
<dbReference type="KEGG" id="ath:AT2G20850"/>
<dbReference type="Araport" id="AT2G20850"/>
<dbReference type="TAIR" id="AT2G20850">
    <property type="gene designation" value="SRF1"/>
</dbReference>
<dbReference type="eggNOG" id="ENOG502QR8F">
    <property type="taxonomic scope" value="Eukaryota"/>
</dbReference>
<dbReference type="HOGENOM" id="CLU_000288_92_2_1"/>
<dbReference type="InParanoid" id="Q06BH3"/>
<dbReference type="OMA" id="HEANRIP"/>
<dbReference type="PhylomeDB" id="Q06BH3"/>
<dbReference type="PRO" id="PR:Q06BH3"/>
<dbReference type="Proteomes" id="UP000006548">
    <property type="component" value="Chromosome 2"/>
</dbReference>
<dbReference type="ExpressionAtlas" id="Q06BH3">
    <property type="expression patterns" value="baseline and differential"/>
</dbReference>
<dbReference type="GO" id="GO:0005886">
    <property type="term" value="C:plasma membrane"/>
    <property type="evidence" value="ECO:0007005"/>
    <property type="project" value="TAIR"/>
</dbReference>
<dbReference type="GO" id="GO:0009506">
    <property type="term" value="C:plasmodesma"/>
    <property type="evidence" value="ECO:0007005"/>
    <property type="project" value="TAIR"/>
</dbReference>
<dbReference type="GO" id="GO:0005524">
    <property type="term" value="F:ATP binding"/>
    <property type="evidence" value="ECO:0007669"/>
    <property type="project" value="InterPro"/>
</dbReference>
<dbReference type="GO" id="GO:0004672">
    <property type="term" value="F:protein kinase activity"/>
    <property type="evidence" value="ECO:0007669"/>
    <property type="project" value="InterPro"/>
</dbReference>
<dbReference type="FunFam" id="3.80.10.10:FF:000062">
    <property type="entry name" value="protein STRUBBELIG-RECEPTOR FAMILY 3"/>
    <property type="match status" value="1"/>
</dbReference>
<dbReference type="FunFam" id="3.30.200.20:FF:000125">
    <property type="entry name" value="Protein STRUBBELIG-RECEPTOR FAMILY 8"/>
    <property type="match status" value="1"/>
</dbReference>
<dbReference type="FunFam" id="1.10.510.10:FF:000095">
    <property type="entry name" value="protein STRUBBELIG-RECEPTOR FAMILY 8"/>
    <property type="match status" value="1"/>
</dbReference>
<dbReference type="Gene3D" id="3.30.200.20">
    <property type="entry name" value="Phosphorylase Kinase, domain 1"/>
    <property type="match status" value="1"/>
</dbReference>
<dbReference type="Gene3D" id="3.80.10.10">
    <property type="entry name" value="Ribonuclease Inhibitor"/>
    <property type="match status" value="2"/>
</dbReference>
<dbReference type="Gene3D" id="1.10.510.10">
    <property type="entry name" value="Transferase(Phosphotransferase) domain 1"/>
    <property type="match status" value="1"/>
</dbReference>
<dbReference type="InterPro" id="IPR011009">
    <property type="entry name" value="Kinase-like_dom_sf"/>
</dbReference>
<dbReference type="InterPro" id="IPR001611">
    <property type="entry name" value="Leu-rich_rpt"/>
</dbReference>
<dbReference type="InterPro" id="IPR032675">
    <property type="entry name" value="LRR_dom_sf"/>
</dbReference>
<dbReference type="InterPro" id="IPR013210">
    <property type="entry name" value="LRR_N_plant-typ"/>
</dbReference>
<dbReference type="InterPro" id="IPR046959">
    <property type="entry name" value="PRK1-6/SRF4-like"/>
</dbReference>
<dbReference type="InterPro" id="IPR000719">
    <property type="entry name" value="Prot_kinase_dom"/>
</dbReference>
<dbReference type="InterPro" id="IPR001245">
    <property type="entry name" value="Ser-Thr/Tyr_kinase_cat_dom"/>
</dbReference>
<dbReference type="PANTHER" id="PTHR48007">
    <property type="entry name" value="LEUCINE-RICH REPEAT RECEPTOR-LIKE PROTEIN KINASE PXC1"/>
    <property type="match status" value="1"/>
</dbReference>
<dbReference type="PANTHER" id="PTHR48007:SF22">
    <property type="entry name" value="PROTEIN STRUBBELIG-RECEPTOR FAMILY 3-LIKE ISOFORM X1"/>
    <property type="match status" value="1"/>
</dbReference>
<dbReference type="Pfam" id="PF00560">
    <property type="entry name" value="LRR_1"/>
    <property type="match status" value="1"/>
</dbReference>
<dbReference type="Pfam" id="PF13855">
    <property type="entry name" value="LRR_8"/>
    <property type="match status" value="1"/>
</dbReference>
<dbReference type="Pfam" id="PF08263">
    <property type="entry name" value="LRRNT_2"/>
    <property type="match status" value="1"/>
</dbReference>
<dbReference type="Pfam" id="PF07714">
    <property type="entry name" value="PK_Tyr_Ser-Thr"/>
    <property type="match status" value="1"/>
</dbReference>
<dbReference type="SUPFAM" id="SSF52058">
    <property type="entry name" value="L domain-like"/>
    <property type="match status" value="1"/>
</dbReference>
<dbReference type="SUPFAM" id="SSF56112">
    <property type="entry name" value="Protein kinase-like (PK-like)"/>
    <property type="match status" value="1"/>
</dbReference>
<dbReference type="PROSITE" id="PS50011">
    <property type="entry name" value="PROTEIN_KINASE_DOM"/>
    <property type="match status" value="1"/>
</dbReference>
<comment type="function">
    <text evidence="4 5">Not essential for epidermal patterning and not redundant with STRUBBELIG.</text>
</comment>
<comment type="interaction">
    <interactant intactId="EBI-16955764">
        <id>Q06BH3</id>
    </interactant>
    <interactant intactId="EBI-617138">
        <id>Q94F62</id>
        <label>BAK1</label>
    </interactant>
    <organismsDiffer>false</organismsDiffer>
    <experiments>2</experiments>
</comment>
<comment type="interaction">
    <interactant intactId="EBI-16955764">
        <id>Q06BH3</id>
    </interactant>
    <interactant intactId="EBI-16895926">
        <id>Q6XAT2</id>
        <label>ERL2</label>
    </interactant>
    <organismsDiffer>false</organismsDiffer>
    <experiments>2</experiments>
</comment>
<comment type="interaction">
    <interactant intactId="EBI-16955764">
        <id>Q06BH3</id>
    </interactant>
    <interactant intactId="EBI-16905069">
        <id>C0LGQ5</id>
        <label>GSO1</label>
    </interactant>
    <organismsDiffer>false</organismsDiffer>
    <experiments>2</experiments>
</comment>
<comment type="subcellular location">
    <subcellularLocation>
        <location evidence="7">Membrane</location>
        <topology evidence="7">Single-pass membrane protein</topology>
    </subcellularLocation>
</comment>
<comment type="alternative products">
    <event type="alternative splicing"/>
    <isoform>
        <id>Q06BH3-1</id>
        <name>A</name>
        <sequence type="displayed"/>
    </isoform>
    <isoform>
        <id>Q06BH3-2</id>
        <name>B</name>
        <sequence type="described" ref="VSP_029608 VSP_029609"/>
    </isoform>
    <text>Alternative splicing was observed in all tissues.</text>
</comment>
<comment type="tissue specificity">
    <text evidence="5">Expressed in roots, stems, leaves and flowers. Low expression in seedlings and siliques.</text>
</comment>
<comment type="domain">
    <text>The protein kinase domain is predicted to be catalytically inactive.</text>
</comment>
<comment type="disruption phenotype">
    <text evidence="4">Plants do not show root phenotype alteration.</text>
</comment>
<comment type="miscellaneous">
    <text>Over-expression of SRF1B induces no obvious phenotypes while overexpression of SRF1A may lead to seedling lethality in both cv. Landsberg and cv. Columbia.</text>
</comment>
<comment type="similarity">
    <text evidence="2">Belongs to the protein kinase superfamily. Ser/Thr protein kinase family.</text>
</comment>
<comment type="sequence caution" evidence="7">
    <conflict type="erroneous initiation">
        <sequence resource="EMBL-CDS" id="AAD20910"/>
    </conflict>
</comment>
<comment type="sequence caution" evidence="7">
    <conflict type="erroneous initiation">
        <sequence resource="EMBL-CDS" id="AAR99869"/>
    </conflict>
</comment>
<proteinExistence type="evidence at protein level"/>
<protein>
    <recommendedName>
        <fullName>Protein STRUBBELIG-RECEPTOR FAMILY 1</fullName>
    </recommendedName>
    <alternativeName>
        <fullName>Leucine-rich repeat receptor kinase-like protein SRF1</fullName>
    </alternativeName>
</protein>
<feature type="signal peptide" evidence="1">
    <location>
        <begin position="1"/>
        <end position="31"/>
    </location>
</feature>
<feature type="chain" id="PRO_0000311841" description="Protein STRUBBELIG-RECEPTOR FAMILY 1">
    <location>
        <begin position="32"/>
        <end position="775"/>
    </location>
</feature>
<feature type="topological domain" description="Extracellular" evidence="1">
    <location>
        <begin position="32"/>
        <end position="314"/>
    </location>
</feature>
<feature type="transmembrane region" description="Helical" evidence="1">
    <location>
        <begin position="315"/>
        <end position="335"/>
    </location>
</feature>
<feature type="topological domain" description="Cytoplasmic" evidence="1">
    <location>
        <begin position="336"/>
        <end position="775"/>
    </location>
</feature>
<feature type="repeat" description="LRR 1">
    <location>
        <begin position="101"/>
        <end position="122"/>
    </location>
</feature>
<feature type="repeat" description="LRR 2">
    <location>
        <begin position="123"/>
        <end position="146"/>
    </location>
</feature>
<feature type="repeat" description="LRR 3">
    <location>
        <begin position="147"/>
        <end position="169"/>
    </location>
</feature>
<feature type="repeat" description="LRR 4">
    <location>
        <begin position="171"/>
        <end position="193"/>
    </location>
</feature>
<feature type="repeat" description="LRR 5">
    <location>
        <begin position="195"/>
        <end position="217"/>
    </location>
</feature>
<feature type="repeat" description="LRR 6">
    <location>
        <begin position="218"/>
        <end position="238"/>
    </location>
</feature>
<feature type="domain" description="Protein kinase" evidence="2">
    <location>
        <begin position="478"/>
        <end position="756"/>
    </location>
</feature>
<feature type="region of interest" description="Disordered" evidence="3">
    <location>
        <begin position="254"/>
        <end position="308"/>
    </location>
</feature>
<feature type="region of interest" description="Disordered" evidence="3">
    <location>
        <begin position="345"/>
        <end position="414"/>
    </location>
</feature>
<feature type="compositionally biased region" description="Pro residues" evidence="3">
    <location>
        <begin position="256"/>
        <end position="278"/>
    </location>
</feature>
<feature type="compositionally biased region" description="Polar residues" evidence="3">
    <location>
        <begin position="367"/>
        <end position="379"/>
    </location>
</feature>
<feature type="compositionally biased region" description="Basic and acidic residues" evidence="3">
    <location>
        <begin position="380"/>
        <end position="391"/>
    </location>
</feature>
<feature type="glycosylation site" description="N-linked (GlcNAc...) asparagine" evidence="1">
    <location>
        <position position="133"/>
    </location>
</feature>
<feature type="glycosylation site" description="N-linked (GlcNAc...) asparagine" evidence="1">
    <location>
        <position position="181"/>
    </location>
</feature>
<feature type="glycosylation site" description="N-linked (GlcNAc...) asparagine" evidence="1">
    <location>
        <position position="192"/>
    </location>
</feature>
<feature type="glycosylation site" description="N-linked (GlcNAc...) asparagine" evidence="1">
    <location>
        <position position="250"/>
    </location>
</feature>
<feature type="glycosylation site" description="N-linked (GlcNAc...) asparagine" evidence="1">
    <location>
        <position position="279"/>
    </location>
</feature>
<feature type="splice variant" id="VSP_029608" description="In isoform B." evidence="6">
    <original>DKEARPKERVGGASKLHGGAERSVGSESKQESHEIDMNG</original>
    <variation>GEISYLDFFTFRFQESHMFVFSSSMKFKQKTRRLDQKRE</variation>
    <location>
        <begin position="382"/>
        <end position="420"/>
    </location>
</feature>
<feature type="splice variant" id="VSP_029609" description="In isoform B." evidence="6">
    <location>
        <begin position="421"/>
        <end position="775"/>
    </location>
</feature>
<feature type="sequence variant" description="In strain: cv. Landsberg erecta.">
    <original>T</original>
    <variation>N</variation>
    <location>
        <position position="195"/>
    </location>
</feature>
<feature type="sequence variant" description="In strain: cv. Landsberg erecta.">
    <original>A</original>
    <variation>T</variation>
    <location>
        <position position="282"/>
    </location>
</feature>
<feature type="sequence variant" description="In strain: cv. Landsberg erecta.">
    <original>R</original>
    <variation>K</variation>
    <location>
        <position position="361"/>
    </location>
</feature>
<feature type="sequence variant" description="In strain: cv. Landsberg erecta.">
    <original>R</original>
    <variation>K</variation>
    <location>
        <position position="386"/>
    </location>
</feature>
<feature type="sequence variant" description="In strain: cv. Landsberg erecta.">
    <original>S</original>
    <variation>L</variation>
    <location>
        <position position="395"/>
    </location>
</feature>
<feature type="sequence variant" description="In strain: cv. Landsberg erecta.">
    <original>H</original>
    <variation>Q</variation>
    <location>
        <position position="398"/>
    </location>
</feature>
<feature type="sequence variant" description="In strain: cv. Landsberg erecta.">
    <original>E</original>
    <variation>K</variation>
    <location>
        <position position="408"/>
    </location>
</feature>
<feature type="sequence variant" description="In strain: cv. Landsberg erecta.">
    <original>G</original>
    <variation>D</variation>
    <location>
        <position position="420"/>
    </location>
</feature>
<feature type="sequence variant" description="In strain: cv. Landsberg erecta.">
    <original>T</original>
    <variation>N</variation>
    <location>
        <position position="442"/>
    </location>
</feature>
<feature type="sequence variant" description="In strain: cv. Landsberg erecta.">
    <original>RTT</original>
    <variation>KTS</variation>
    <location>
        <begin position="451"/>
        <end position="453"/>
    </location>
</feature>
<feature type="sequence variant" description="In strain: cv. Landsberg erecta.">
    <original>S</original>
    <variation>N</variation>
    <location>
        <position position="477"/>
    </location>
</feature>
<feature type="sequence variant" description="In strain: cv. Landsberg erecta.">
    <original>H</original>
    <variation>L</variation>
    <location>
        <position position="480"/>
    </location>
</feature>
<feature type="sequence variant" description="In strain: cv. Landsberg erecta.">
    <original>F</original>
    <variation>L</variation>
    <location>
        <position position="503"/>
    </location>
</feature>
<feature type="sequence variant" description="In strain: cv. Landsberg erecta.">
    <original>R</original>
    <variation>K</variation>
    <location>
        <position position="506"/>
    </location>
</feature>
<feature type="sequence variant" description="In strain: cv. Landsberg erecta.">
    <original>L</original>
    <variation>V</variation>
    <location>
        <position position="522"/>
    </location>
</feature>
<feature type="sequence variant" description="In strain: cv. Landsberg erecta.">
    <original>I</original>
    <variation>T</variation>
    <location>
        <position position="567"/>
    </location>
</feature>
<feature type="sequence variant" description="In strain: cv. Landsberg erecta.">
    <original>V</original>
    <variation>I</variation>
    <location>
        <position position="579"/>
    </location>
</feature>
<feature type="sequence variant" description="In strain: cv. Landsberg erecta.">
    <original>I</original>
    <variation>M</variation>
    <location>
        <position position="583"/>
    </location>
</feature>
<feature type="sequence variant" description="In strain: cv. Landsberg erecta.">
    <original>P</original>
    <variation>L</variation>
    <location>
        <position position="600"/>
    </location>
</feature>
<feature type="sequence variant" description="In strain: cv. Landsberg erecta.">
    <original>R</original>
    <variation>Q</variation>
    <location>
        <position position="605"/>
    </location>
</feature>
<feature type="sequence variant" description="In strain: cv. Landsberg erecta.">
    <original>I</original>
    <variation>M</variation>
    <location>
        <position position="618"/>
    </location>
</feature>
<feature type="sequence variant" description="In strain: cv. Landsberg erecta.">
    <original>A</original>
    <variation>E</variation>
    <location>
        <position position="708"/>
    </location>
</feature>
<feature type="sequence variant" description="In strain: cv. Landsberg erecta.">
    <original>Y</original>
    <variation>F</variation>
    <location>
        <position position="741"/>
    </location>
</feature>
<feature type="sequence variant" description="In strain: cv. Landsberg erecta.">
    <original>G</original>
    <variation>R</variation>
    <location>
        <position position="773"/>
    </location>
</feature>
<feature type="sequence variant" description="In strain: cv. Landsberg erecta." evidence="7">
    <original>S</original>
    <variation>N</variation>
    <location sequence="Q06BH3-2">
        <position position="397"/>
    </location>
</feature>
<feature type="sequence variant" description="In strain: cv. Landsberg erecta." evidence="7">
    <original>S</original>
    <variation>P</variation>
    <location sequence="Q06BH3-2">
        <position position="404"/>
    </location>
</feature>
<feature type="sequence variant" description="In strain: cv. Landsberg erecta." evidence="7">
    <original>D</original>
    <variation>N</variation>
    <location sequence="Q06BH3-2">
        <position position="416"/>
    </location>
</feature>
<keyword id="KW-0025">Alternative splicing</keyword>
<keyword id="KW-0325">Glycoprotein</keyword>
<keyword id="KW-0433">Leucine-rich repeat</keyword>
<keyword id="KW-0472">Membrane</keyword>
<keyword id="KW-0675">Receptor</keyword>
<keyword id="KW-1185">Reference proteome</keyword>
<keyword id="KW-0677">Repeat</keyword>
<keyword id="KW-0732">Signal</keyword>
<keyword id="KW-0812">Transmembrane</keyword>
<keyword id="KW-1133">Transmembrane helix</keyword>
<reference key="1">
    <citation type="journal article" date="2007" name="BMC Plant Biol.">
        <title>Molecular characterisation of the STRUBBELIG-RECEPTOR FAMILY of genes encoding putative leucine-rich repeat receptor-like kinases in Arabidopsis thaliana.</title>
        <authorList>
            <person name="Eyueboglu B."/>
            <person name="Pfister K."/>
            <person name="Haberer G."/>
            <person name="Chevalier D."/>
            <person name="Fuchs A."/>
            <person name="Mayer K.F.X."/>
            <person name="Schneitz K."/>
        </authorList>
    </citation>
    <scope>NUCLEOTIDE SEQUENCE [GENOMIC DNA / MRNA] (ISOFORMS A AND B)</scope>
    <scope>POLYMORPHISM</scope>
    <scope>FUNCTION</scope>
    <scope>TISSUE SPECIFICITY</scope>
    <source>
        <strain>cv. Columbia</strain>
        <strain>cv. Landsberg erecta</strain>
    </source>
</reference>
<reference key="2">
    <citation type="journal article" date="1999" name="Nature">
        <title>Sequence and analysis of chromosome 2 of the plant Arabidopsis thaliana.</title>
        <authorList>
            <person name="Lin X."/>
            <person name="Kaul S."/>
            <person name="Rounsley S.D."/>
            <person name="Shea T.P."/>
            <person name="Benito M.-I."/>
            <person name="Town C.D."/>
            <person name="Fujii C.Y."/>
            <person name="Mason T.M."/>
            <person name="Bowman C.L."/>
            <person name="Barnstead M.E."/>
            <person name="Feldblyum T.V."/>
            <person name="Buell C.R."/>
            <person name="Ketchum K.A."/>
            <person name="Lee J.J."/>
            <person name="Ronning C.M."/>
            <person name="Koo H.L."/>
            <person name="Moffat K.S."/>
            <person name="Cronin L.A."/>
            <person name="Shen M."/>
            <person name="Pai G."/>
            <person name="Van Aken S."/>
            <person name="Umayam L."/>
            <person name="Tallon L.J."/>
            <person name="Gill J.E."/>
            <person name="Adams M.D."/>
            <person name="Carrera A.J."/>
            <person name="Creasy T.H."/>
            <person name="Goodman H.M."/>
            <person name="Somerville C.R."/>
            <person name="Copenhaver G.P."/>
            <person name="Preuss D."/>
            <person name="Nierman W.C."/>
            <person name="White O."/>
            <person name="Eisen J.A."/>
            <person name="Salzberg S.L."/>
            <person name="Fraser C.M."/>
            <person name="Venter J.C."/>
        </authorList>
    </citation>
    <scope>NUCLEOTIDE SEQUENCE [LARGE SCALE GENOMIC DNA]</scope>
    <source>
        <strain>cv. Columbia</strain>
    </source>
</reference>
<reference key="3">
    <citation type="journal article" date="2017" name="Plant J.">
        <title>Araport11: a complete reannotation of the Arabidopsis thaliana reference genome.</title>
        <authorList>
            <person name="Cheng C.Y."/>
            <person name="Krishnakumar V."/>
            <person name="Chan A.P."/>
            <person name="Thibaud-Nissen F."/>
            <person name="Schobel S."/>
            <person name="Town C.D."/>
        </authorList>
    </citation>
    <scope>GENOME REANNOTATION</scope>
    <source>
        <strain>cv. Columbia</strain>
    </source>
</reference>
<reference key="4">
    <citation type="journal article" date="2003" name="Science">
        <title>Empirical analysis of transcriptional activity in the Arabidopsis genome.</title>
        <authorList>
            <person name="Yamada K."/>
            <person name="Lim J."/>
            <person name="Dale J.M."/>
            <person name="Chen H."/>
            <person name="Shinn P."/>
            <person name="Palm C.J."/>
            <person name="Southwick A.M."/>
            <person name="Wu H.C."/>
            <person name="Kim C.J."/>
            <person name="Nguyen M."/>
            <person name="Pham P.K."/>
            <person name="Cheuk R.F."/>
            <person name="Karlin-Newmann G."/>
            <person name="Liu S.X."/>
            <person name="Lam B."/>
            <person name="Sakano H."/>
            <person name="Wu T."/>
            <person name="Yu G."/>
            <person name="Miranda M."/>
            <person name="Quach H.L."/>
            <person name="Tripp M."/>
            <person name="Chang C.H."/>
            <person name="Lee J.M."/>
            <person name="Toriumi M.J."/>
            <person name="Chan M.M."/>
            <person name="Tang C.C."/>
            <person name="Onodera C.S."/>
            <person name="Deng J.M."/>
            <person name="Akiyama K."/>
            <person name="Ansari Y."/>
            <person name="Arakawa T."/>
            <person name="Banh J."/>
            <person name="Banno F."/>
            <person name="Bowser L."/>
            <person name="Brooks S.Y."/>
            <person name="Carninci P."/>
            <person name="Chao Q."/>
            <person name="Choy N."/>
            <person name="Enju A."/>
            <person name="Goldsmith A.D."/>
            <person name="Gurjal M."/>
            <person name="Hansen N.F."/>
            <person name="Hayashizaki Y."/>
            <person name="Johnson-Hopson C."/>
            <person name="Hsuan V.W."/>
            <person name="Iida K."/>
            <person name="Karnes M."/>
            <person name="Khan S."/>
            <person name="Koesema E."/>
            <person name="Ishida J."/>
            <person name="Jiang P.X."/>
            <person name="Jones T."/>
            <person name="Kawai J."/>
            <person name="Kamiya A."/>
            <person name="Meyers C."/>
            <person name="Nakajima M."/>
            <person name="Narusaka M."/>
            <person name="Seki M."/>
            <person name="Sakurai T."/>
            <person name="Satou M."/>
            <person name="Tamse R."/>
            <person name="Vaysberg M."/>
            <person name="Wallender E.K."/>
            <person name="Wong C."/>
            <person name="Yamamura Y."/>
            <person name="Yuan S."/>
            <person name="Shinozaki K."/>
            <person name="Davis R.W."/>
            <person name="Theologis A."/>
            <person name="Ecker J.R."/>
        </authorList>
    </citation>
    <scope>NUCLEOTIDE SEQUENCE [LARGE SCALE MRNA] OF 4-775</scope>
    <source>
        <strain>cv. Columbia</strain>
    </source>
</reference>
<reference key="5">
    <citation type="journal article" date="2007" name="Dev. Biol.">
        <title>The role of the SCRAMBLED receptor-like kinase in patterning the Arabidopsis root epidermis.</title>
        <authorList>
            <person name="Kwak S.-H."/>
            <person name="Schiefelbein J."/>
        </authorList>
    </citation>
    <scope>FUNCTION</scope>
    <scope>DISRUPTION PHENOTYPE</scope>
</reference>
<gene>
    <name type="primary">SRF1</name>
    <name type="ordered locus">At2g20850</name>
    <name type="ORF">F5H14.18</name>
</gene>
<name>SRF1_ARATH</name>
<sequence>MRSMRSGRDNNICFLGFLSFALISLPSLSLALTNPDDVAAINSLFLALESPLLPGWVASGGDPCGESWQGVLCNASQVETIILISANLGGELGVGLNMFTSLKAMDFSNNHIGGSIPSTLPVSLQNLFLSGNNFTGTIPESLSSLKSLSVMSLNNNLLSGKIPDVFQDLGLMINIDLSSNNLSGPLPPSMQNLSTLTSLLLQNNHLSGELDVLQDLPLKDLNVENNLFNGPIPEKLLSIPNFIKGGNLFNVTIAPSPSPETPPSPTSPKRPFFGPPSPNASAGHGQAHVRSPPSDHHPSRPTPQGKEDSFTSKRIIWISILGAFSFVVLALVCLLCGRKCLRKREDSEQLSKPHLTSEYGRAREGSRSNASMLPPSNTFNKDKEARPKERVGGASKLHGGAERSVGSESKQESHEIDMNGNAMDLMHPSSIPPIKRVIAKATEPAEASLKRTTSKSHGPLTAVKHFTVASLQQHTNSFSHENLIGTGMLGSVYRAELPGGKLFAVRKLDKKSPNHEEEGKFLELVNNIDRIRHANIVQLVGFCSEHSQRLLIHEYCRNGTLHDLLHIDDRLKIELSWNVRVRIALEAAKALEYLHEICDPPSIHRNFKSANILLDDDIRVHVSDCGLAPLISSGAVSQLSGQLLAAYGYGAPEFEYGIYTMKCDVYSFGVVMLELLTGRKSYDKKRDRGEQFLVRWAIPQLHDIDALAKMVDPSLKGDYPAKSLSHFADVISRCVQSEPEYRPLMSEVVQDLSDMIQREHRRNDSNGDNQYTGRR</sequence>
<evidence type="ECO:0000255" key="1"/>
<evidence type="ECO:0000255" key="2">
    <source>
        <dbReference type="PROSITE-ProRule" id="PRU00159"/>
    </source>
</evidence>
<evidence type="ECO:0000256" key="3">
    <source>
        <dbReference type="SAM" id="MobiDB-lite"/>
    </source>
</evidence>
<evidence type="ECO:0000269" key="4">
    <source>
    </source>
</evidence>
<evidence type="ECO:0000269" key="5">
    <source>
    </source>
</evidence>
<evidence type="ECO:0000303" key="6">
    <source>
    </source>
</evidence>
<evidence type="ECO:0000305" key="7"/>
<organism>
    <name type="scientific">Arabidopsis thaliana</name>
    <name type="common">Mouse-ear cress</name>
    <dbReference type="NCBI Taxonomy" id="3702"/>
    <lineage>
        <taxon>Eukaryota</taxon>
        <taxon>Viridiplantae</taxon>
        <taxon>Streptophyta</taxon>
        <taxon>Embryophyta</taxon>
        <taxon>Tracheophyta</taxon>
        <taxon>Spermatophyta</taxon>
        <taxon>Magnoliopsida</taxon>
        <taxon>eudicotyledons</taxon>
        <taxon>Gunneridae</taxon>
        <taxon>Pentapetalae</taxon>
        <taxon>rosids</taxon>
        <taxon>malvids</taxon>
        <taxon>Brassicales</taxon>
        <taxon>Brassicaceae</taxon>
        <taxon>Camelineae</taxon>
        <taxon>Arabidopsis</taxon>
    </lineage>
</organism>
<accession>Q06BH3</accession>
<accession>Q06BH2</accession>
<accession>Q06BH4</accession>
<accession>Q93ZY8</accession>
<accession>Q9MAS2</accession>